<gene>
    <name type="primary">eccD4</name>
    <name type="ordered locus">MT3554</name>
</gene>
<comment type="subunit">
    <text evidence="1">Part of the ESX-4 / type VII secretion system (T7SS), which is composed of cytosolic and membrane components.</text>
</comment>
<comment type="subcellular location">
    <subcellularLocation>
        <location evidence="3">Cell membrane</location>
        <topology evidence="3">Multi-pass membrane protein</topology>
    </subcellularLocation>
</comment>
<comment type="similarity">
    <text evidence="3">Belongs to the EccD/Snm4 family.</text>
</comment>
<evidence type="ECO:0000250" key="1"/>
<evidence type="ECO:0000255" key="2"/>
<evidence type="ECO:0000305" key="3"/>
<dbReference type="EMBL" id="AE000516">
    <property type="protein sequence ID" value="AAK47894.1"/>
    <property type="molecule type" value="Genomic_DNA"/>
</dbReference>
<dbReference type="PIR" id="E70564">
    <property type="entry name" value="E70564"/>
</dbReference>
<dbReference type="RefSeq" id="WP_003900062.1">
    <property type="nucleotide sequence ID" value="NZ_KK341227.1"/>
</dbReference>
<dbReference type="SMR" id="P9WNQ0"/>
<dbReference type="KEGG" id="mtc:MT3554"/>
<dbReference type="PATRIC" id="fig|83331.31.peg.3813"/>
<dbReference type="HOGENOM" id="CLU_028325_2_0_11"/>
<dbReference type="Proteomes" id="UP000001020">
    <property type="component" value="Chromosome"/>
</dbReference>
<dbReference type="GO" id="GO:0005886">
    <property type="term" value="C:plasma membrane"/>
    <property type="evidence" value="ECO:0007669"/>
    <property type="project" value="UniProtKB-SubCell"/>
</dbReference>
<dbReference type="Gene3D" id="3.10.20.90">
    <property type="entry name" value="Phosphatidylinositol 3-kinase Catalytic Subunit, Chain A, domain 1"/>
    <property type="match status" value="1"/>
</dbReference>
<dbReference type="InterPro" id="IPR044049">
    <property type="entry name" value="EccD_transm"/>
</dbReference>
<dbReference type="InterPro" id="IPR006707">
    <property type="entry name" value="T7SS_EccD"/>
</dbReference>
<dbReference type="InterPro" id="IPR024962">
    <property type="entry name" value="YukD-like"/>
</dbReference>
<dbReference type="NCBIfam" id="TIGR03920">
    <property type="entry name" value="T7SS_EccD"/>
    <property type="match status" value="1"/>
</dbReference>
<dbReference type="Pfam" id="PF19053">
    <property type="entry name" value="EccD"/>
    <property type="match status" value="1"/>
</dbReference>
<dbReference type="Pfam" id="PF08817">
    <property type="entry name" value="YukD"/>
    <property type="match status" value="1"/>
</dbReference>
<dbReference type="PIRSF" id="PIRSF017804">
    <property type="entry name" value="Secretion_EccD1"/>
    <property type="match status" value="1"/>
</dbReference>
<accession>P9WNQ0</accession>
<accession>L0TFN3</accession>
<accession>O33354</accession>
<accession>Q7D5I9</accession>
<organism>
    <name type="scientific">Mycobacterium tuberculosis (strain CDC 1551 / Oshkosh)</name>
    <dbReference type="NCBI Taxonomy" id="83331"/>
    <lineage>
        <taxon>Bacteria</taxon>
        <taxon>Bacillati</taxon>
        <taxon>Actinomycetota</taxon>
        <taxon>Actinomycetes</taxon>
        <taxon>Mycobacteriales</taxon>
        <taxon>Mycobacteriaceae</taxon>
        <taxon>Mycobacterium</taxon>
        <taxon>Mycobacterium tuberculosis complex</taxon>
    </lineage>
</organism>
<feature type="chain" id="PRO_0000427088" description="ESX-4 secretion system protein eccD4">
    <location>
        <begin position="1"/>
        <end position="467"/>
    </location>
</feature>
<feature type="transmembrane region" description="Helical" evidence="2">
    <location>
        <begin position="122"/>
        <end position="142"/>
    </location>
</feature>
<feature type="transmembrane region" description="Helical" evidence="2">
    <location>
        <begin position="152"/>
        <end position="172"/>
    </location>
</feature>
<feature type="transmembrane region" description="Helical" evidence="2">
    <location>
        <begin position="186"/>
        <end position="206"/>
    </location>
</feature>
<feature type="transmembrane region" description="Helical" evidence="2">
    <location>
        <begin position="209"/>
        <end position="229"/>
    </location>
</feature>
<feature type="transmembrane region" description="Helical" evidence="2">
    <location>
        <begin position="241"/>
        <end position="261"/>
    </location>
</feature>
<feature type="transmembrane region" description="Helical" evidence="2">
    <location>
        <begin position="264"/>
        <end position="284"/>
    </location>
</feature>
<feature type="transmembrane region" description="Helical" evidence="2">
    <location>
        <begin position="319"/>
        <end position="339"/>
    </location>
</feature>
<feature type="transmembrane region" description="Helical" evidence="2">
    <location>
        <begin position="344"/>
        <end position="364"/>
    </location>
</feature>
<feature type="transmembrane region" description="Helical" evidence="2">
    <location>
        <begin position="374"/>
        <end position="394"/>
    </location>
</feature>
<feature type="transmembrane region" description="Helical" evidence="2">
    <location>
        <begin position="401"/>
        <end position="421"/>
    </location>
</feature>
<feature type="transmembrane region" description="Helical" evidence="2">
    <location>
        <begin position="439"/>
        <end position="459"/>
    </location>
</feature>
<sequence>MPTSDPGLRRVTVHAGAQAVDLTLPAAVPVATLIPSIVDILGDRGASPATAARYQLSALGAPALPNATTLAQCGIRDGAVLVLHKSSAQPPTPRCDDVAEAVAAALDTTARPQCQRTTRLSGALAASCITAGGGLMLVRNALGTNVTRYSDATAGVVAAAGLAALLFAVIACRTYRDPIAGLTLSVIATIFGAVAGLLAVPGVPGVHSVLVAAMAAAATSVLAMRITGCGGITLTAVACCAVVVAAATLVGAITAAPVPAIGSLATLASFGLLEVSARMAVLLAGLSPRLPPALNPDDADALPTTDRLTTRANRADAWLTSLLAAFAASATIGAIGTAVATHGIHRSSMGGIALAAVTGALLLLRARSADTRRSLVFAICGITTVATAFTVAADRALEHGPWIAALTAMLAAVAMFLGFVAPALSLSPVTYRTIELLECLALIAMVPLTAWLCGAYSAVRHLDLTWT</sequence>
<protein>
    <recommendedName>
        <fullName>ESX-4 secretion system protein eccD4</fullName>
    </recommendedName>
    <alternativeName>
        <fullName>ESX conserved component D4</fullName>
    </alternativeName>
    <alternativeName>
        <fullName>Type VII secretion system protein eccD4</fullName>
        <shortName>T7SS protein eccD4</shortName>
    </alternativeName>
</protein>
<proteinExistence type="inferred from homology"/>
<reference key="1">
    <citation type="journal article" date="2002" name="J. Bacteriol.">
        <title>Whole-genome comparison of Mycobacterium tuberculosis clinical and laboratory strains.</title>
        <authorList>
            <person name="Fleischmann R.D."/>
            <person name="Alland D."/>
            <person name="Eisen J.A."/>
            <person name="Carpenter L."/>
            <person name="White O."/>
            <person name="Peterson J.D."/>
            <person name="DeBoy R.T."/>
            <person name="Dodson R.J."/>
            <person name="Gwinn M.L."/>
            <person name="Haft D.H."/>
            <person name="Hickey E.K."/>
            <person name="Kolonay J.F."/>
            <person name="Nelson W.C."/>
            <person name="Umayam L.A."/>
            <person name="Ermolaeva M.D."/>
            <person name="Salzberg S.L."/>
            <person name="Delcher A."/>
            <person name="Utterback T.R."/>
            <person name="Weidman J.F."/>
            <person name="Khouri H.M."/>
            <person name="Gill J."/>
            <person name="Mikula A."/>
            <person name="Bishai W."/>
            <person name="Jacobs W.R. Jr."/>
            <person name="Venter J.C."/>
            <person name="Fraser C.M."/>
        </authorList>
    </citation>
    <scope>NUCLEOTIDE SEQUENCE [LARGE SCALE GENOMIC DNA]</scope>
    <source>
        <strain>CDC 1551 / Oshkosh</strain>
    </source>
</reference>
<name>ECCD4_MYCTO</name>
<keyword id="KW-1003">Cell membrane</keyword>
<keyword id="KW-0472">Membrane</keyword>
<keyword id="KW-1185">Reference proteome</keyword>
<keyword id="KW-0812">Transmembrane</keyword>
<keyword id="KW-1133">Transmembrane helix</keyword>